<name>ANMK_PROM1</name>
<feature type="chain" id="PRO_1000214170" description="Anhydro-N-acetylmuramic acid kinase">
    <location>
        <begin position="1"/>
        <end position="378"/>
    </location>
</feature>
<feature type="binding site" evidence="1">
    <location>
        <begin position="9"/>
        <end position="16"/>
    </location>
    <ligand>
        <name>ATP</name>
        <dbReference type="ChEBI" id="CHEBI:30616"/>
    </ligand>
</feature>
<organism>
    <name type="scientific">Prochlorococcus marinus (strain NATL1A)</name>
    <dbReference type="NCBI Taxonomy" id="167555"/>
    <lineage>
        <taxon>Bacteria</taxon>
        <taxon>Bacillati</taxon>
        <taxon>Cyanobacteriota</taxon>
        <taxon>Cyanophyceae</taxon>
        <taxon>Synechococcales</taxon>
        <taxon>Prochlorococcaceae</taxon>
        <taxon>Prochlorococcus</taxon>
    </lineage>
</organism>
<accession>A2BZQ6</accession>
<protein>
    <recommendedName>
        <fullName evidence="1">Anhydro-N-acetylmuramic acid kinase</fullName>
        <ecNumber evidence="1">2.7.1.170</ecNumber>
    </recommendedName>
    <alternativeName>
        <fullName evidence="1">AnhMurNAc kinase</fullName>
    </alternativeName>
</protein>
<proteinExistence type="inferred from homology"/>
<sequence length="378" mass="41676">MRVLGLMSGTSADGIDAVLVDFTGDPSKPKWQILNTFSYEYPSSIREKIIQVGQGLKISSKDWLELAEEITELNAFAARTCDPDSTAEVVGCHGQTLFHRSVKKSKRGGSLQILLGPLLANLLDQIVIYDFRSKDIASGGHGAPLVALVDEALVGRLYGWRGVLNLGGIANLTIIPPKTGIDKTSQCLGWDCGPANSLVDLAVKESTNSSLTFDENGSLASLGIPKLEIIDKWLRDPFFYLEPPRSTGREQFGFQYLQKRKKELGDISKEDLISTLTTFTASIISQDLDNLFKFKQIRLIELLVAGGGSKNLFLMRQLQKQCCGVHVRPINEIGVPSQYREALVFATLSWWNFLGKKVNPKYITGAKKPILYGVRVDP</sequence>
<keyword id="KW-0067">ATP-binding</keyword>
<keyword id="KW-0119">Carbohydrate metabolism</keyword>
<keyword id="KW-0418">Kinase</keyword>
<keyword id="KW-0547">Nucleotide-binding</keyword>
<keyword id="KW-0808">Transferase</keyword>
<comment type="function">
    <text evidence="1">Catalyzes the specific phosphorylation of 1,6-anhydro-N-acetylmuramic acid (anhMurNAc) with the simultaneous cleavage of the 1,6-anhydro ring, generating MurNAc-6-P. Is required for the utilization of anhMurNAc either imported from the medium or derived from its own cell wall murein, and thus plays a role in cell wall recycling.</text>
</comment>
<comment type="catalytic activity">
    <reaction evidence="1">
        <text>1,6-anhydro-N-acetyl-beta-muramate + ATP + H2O = N-acetyl-D-muramate 6-phosphate + ADP + H(+)</text>
        <dbReference type="Rhea" id="RHEA:24952"/>
        <dbReference type="ChEBI" id="CHEBI:15377"/>
        <dbReference type="ChEBI" id="CHEBI:15378"/>
        <dbReference type="ChEBI" id="CHEBI:30616"/>
        <dbReference type="ChEBI" id="CHEBI:58690"/>
        <dbReference type="ChEBI" id="CHEBI:58722"/>
        <dbReference type="ChEBI" id="CHEBI:456216"/>
        <dbReference type="EC" id="2.7.1.170"/>
    </reaction>
</comment>
<comment type="pathway">
    <text evidence="1">Amino-sugar metabolism; 1,6-anhydro-N-acetylmuramate degradation.</text>
</comment>
<comment type="pathway">
    <text evidence="1">Cell wall biogenesis; peptidoglycan recycling.</text>
</comment>
<comment type="similarity">
    <text evidence="1">Belongs to the anhydro-N-acetylmuramic acid kinase family.</text>
</comment>
<reference key="1">
    <citation type="journal article" date="2007" name="PLoS Genet.">
        <title>Patterns and implications of gene gain and loss in the evolution of Prochlorococcus.</title>
        <authorList>
            <person name="Kettler G.C."/>
            <person name="Martiny A.C."/>
            <person name="Huang K."/>
            <person name="Zucker J."/>
            <person name="Coleman M.L."/>
            <person name="Rodrigue S."/>
            <person name="Chen F."/>
            <person name="Lapidus A."/>
            <person name="Ferriera S."/>
            <person name="Johnson J."/>
            <person name="Steglich C."/>
            <person name="Church G.M."/>
            <person name="Richardson P."/>
            <person name="Chisholm S.W."/>
        </authorList>
    </citation>
    <scope>NUCLEOTIDE SEQUENCE [LARGE SCALE GENOMIC DNA]</scope>
    <source>
        <strain>NATL1A</strain>
    </source>
</reference>
<gene>
    <name evidence="1" type="primary">anmK</name>
    <name type="ordered locus">NATL1_01521</name>
</gene>
<dbReference type="EC" id="2.7.1.170" evidence="1"/>
<dbReference type="EMBL" id="CP000553">
    <property type="protein sequence ID" value="ABM74716.1"/>
    <property type="molecule type" value="Genomic_DNA"/>
</dbReference>
<dbReference type="RefSeq" id="WP_011822946.1">
    <property type="nucleotide sequence ID" value="NC_008819.1"/>
</dbReference>
<dbReference type="SMR" id="A2BZQ6"/>
<dbReference type="KEGG" id="pme:NATL1_01521"/>
<dbReference type="eggNOG" id="COG2377">
    <property type="taxonomic scope" value="Bacteria"/>
</dbReference>
<dbReference type="HOGENOM" id="CLU_038782_1_0_3"/>
<dbReference type="UniPathway" id="UPA00343"/>
<dbReference type="UniPathway" id="UPA00544"/>
<dbReference type="Proteomes" id="UP000002592">
    <property type="component" value="Chromosome"/>
</dbReference>
<dbReference type="GO" id="GO:0005524">
    <property type="term" value="F:ATP binding"/>
    <property type="evidence" value="ECO:0007669"/>
    <property type="project" value="UniProtKB-UniRule"/>
</dbReference>
<dbReference type="GO" id="GO:0016301">
    <property type="term" value="F:kinase activity"/>
    <property type="evidence" value="ECO:0007669"/>
    <property type="project" value="UniProtKB-KW"/>
</dbReference>
<dbReference type="GO" id="GO:0016773">
    <property type="term" value="F:phosphotransferase activity, alcohol group as acceptor"/>
    <property type="evidence" value="ECO:0007669"/>
    <property type="project" value="UniProtKB-UniRule"/>
</dbReference>
<dbReference type="GO" id="GO:0097175">
    <property type="term" value="P:1,6-anhydro-N-acetyl-beta-muramic acid catabolic process"/>
    <property type="evidence" value="ECO:0007669"/>
    <property type="project" value="UniProtKB-UniRule"/>
</dbReference>
<dbReference type="GO" id="GO:0006040">
    <property type="term" value="P:amino sugar metabolic process"/>
    <property type="evidence" value="ECO:0007669"/>
    <property type="project" value="InterPro"/>
</dbReference>
<dbReference type="GO" id="GO:0009254">
    <property type="term" value="P:peptidoglycan turnover"/>
    <property type="evidence" value="ECO:0007669"/>
    <property type="project" value="UniProtKB-UniRule"/>
</dbReference>
<dbReference type="Gene3D" id="3.30.420.40">
    <property type="match status" value="2"/>
</dbReference>
<dbReference type="HAMAP" id="MF_01270">
    <property type="entry name" value="AnhMurNAc_kinase"/>
    <property type="match status" value="1"/>
</dbReference>
<dbReference type="InterPro" id="IPR005338">
    <property type="entry name" value="Anhydro_N_Ac-Mur_kinase"/>
</dbReference>
<dbReference type="InterPro" id="IPR043129">
    <property type="entry name" value="ATPase_NBD"/>
</dbReference>
<dbReference type="NCBIfam" id="NF007145">
    <property type="entry name" value="PRK09585.2-5"/>
    <property type="match status" value="1"/>
</dbReference>
<dbReference type="PANTHER" id="PTHR30605">
    <property type="entry name" value="ANHYDRO-N-ACETYLMURAMIC ACID KINASE"/>
    <property type="match status" value="1"/>
</dbReference>
<dbReference type="PANTHER" id="PTHR30605:SF0">
    <property type="entry name" value="ANHYDRO-N-ACETYLMURAMIC ACID KINASE"/>
    <property type="match status" value="1"/>
</dbReference>
<dbReference type="Pfam" id="PF03702">
    <property type="entry name" value="AnmK"/>
    <property type="match status" value="1"/>
</dbReference>
<dbReference type="SUPFAM" id="SSF53067">
    <property type="entry name" value="Actin-like ATPase domain"/>
    <property type="match status" value="1"/>
</dbReference>
<evidence type="ECO:0000255" key="1">
    <source>
        <dbReference type="HAMAP-Rule" id="MF_01270"/>
    </source>
</evidence>